<evidence type="ECO:0000255" key="1">
    <source>
        <dbReference type="HAMAP-Rule" id="MF_01594"/>
    </source>
</evidence>
<accession>B6I2Y7</accession>
<name>GLPG_ECOSE</name>
<feature type="chain" id="PRO_1000147858" description="Rhomboid protease GlpG">
    <location>
        <begin position="1"/>
        <end position="276"/>
    </location>
</feature>
<feature type="transmembrane region" description="Helical" evidence="1">
    <location>
        <begin position="94"/>
        <end position="114"/>
    </location>
</feature>
<feature type="transmembrane region" description="Helical" evidence="1">
    <location>
        <begin position="142"/>
        <end position="162"/>
    </location>
</feature>
<feature type="transmembrane region" description="Helical" evidence="1">
    <location>
        <begin position="169"/>
        <end position="189"/>
    </location>
</feature>
<feature type="transmembrane region" description="Helical" evidence="1">
    <location>
        <begin position="192"/>
        <end position="212"/>
    </location>
</feature>
<feature type="transmembrane region" description="Helical" evidence="1">
    <location>
        <begin position="229"/>
        <end position="249"/>
    </location>
</feature>
<feature type="transmembrane region" description="Helical" evidence="1">
    <location>
        <begin position="250"/>
        <end position="270"/>
    </location>
</feature>
<feature type="active site" description="Nucleophile" evidence="1">
    <location>
        <position position="201"/>
    </location>
</feature>
<feature type="active site" evidence="1">
    <location>
        <position position="254"/>
    </location>
</feature>
<dbReference type="EC" id="3.4.21.105" evidence="1"/>
<dbReference type="EMBL" id="AP009240">
    <property type="protein sequence ID" value="BAG79214.1"/>
    <property type="molecule type" value="Genomic_DNA"/>
</dbReference>
<dbReference type="RefSeq" id="WP_000928731.1">
    <property type="nucleotide sequence ID" value="NC_011415.1"/>
</dbReference>
<dbReference type="SMR" id="B6I2Y7"/>
<dbReference type="MEROPS" id="S54.016"/>
<dbReference type="GeneID" id="75202266"/>
<dbReference type="KEGG" id="ecy:ECSE_3690"/>
<dbReference type="HOGENOM" id="CLU_058989_0_0_6"/>
<dbReference type="Proteomes" id="UP000008199">
    <property type="component" value="Chromosome"/>
</dbReference>
<dbReference type="GO" id="GO:0005886">
    <property type="term" value="C:plasma membrane"/>
    <property type="evidence" value="ECO:0007669"/>
    <property type="project" value="UniProtKB-SubCell"/>
</dbReference>
<dbReference type="GO" id="GO:0004252">
    <property type="term" value="F:serine-type endopeptidase activity"/>
    <property type="evidence" value="ECO:0007669"/>
    <property type="project" value="UniProtKB-UniRule"/>
</dbReference>
<dbReference type="GO" id="GO:0006508">
    <property type="term" value="P:proteolysis"/>
    <property type="evidence" value="ECO:0007669"/>
    <property type="project" value="UniProtKB-UniRule"/>
</dbReference>
<dbReference type="FunFam" id="1.20.1540.10:FF:000003">
    <property type="entry name" value="Rhomboid protease GlpG"/>
    <property type="match status" value="1"/>
</dbReference>
<dbReference type="FunFam" id="3.30.70.2350:FF:000001">
    <property type="entry name" value="Rhomboid protease GlpG"/>
    <property type="match status" value="1"/>
</dbReference>
<dbReference type="Gene3D" id="3.30.70.2350">
    <property type="match status" value="1"/>
</dbReference>
<dbReference type="Gene3D" id="1.20.1540.10">
    <property type="entry name" value="Rhomboid-like"/>
    <property type="match status" value="1"/>
</dbReference>
<dbReference type="HAMAP" id="MF_01594">
    <property type="entry name" value="Rhomboid_GlpG"/>
    <property type="match status" value="1"/>
</dbReference>
<dbReference type="InterPro" id="IPR038236">
    <property type="entry name" value="GlpG_N_sf"/>
</dbReference>
<dbReference type="InterPro" id="IPR022732">
    <property type="entry name" value="Peptidase_S54_GlpG_N"/>
</dbReference>
<dbReference type="InterPro" id="IPR022764">
    <property type="entry name" value="Peptidase_S54_rhomboid_dom"/>
</dbReference>
<dbReference type="InterPro" id="IPR035952">
    <property type="entry name" value="Rhomboid-like_sf"/>
</dbReference>
<dbReference type="InterPro" id="IPR023662">
    <property type="entry name" value="Rhomboid_protease_GlpG"/>
</dbReference>
<dbReference type="NCBIfam" id="NF008155">
    <property type="entry name" value="PRK10907.1"/>
    <property type="match status" value="1"/>
</dbReference>
<dbReference type="NCBIfam" id="TIGR04239">
    <property type="entry name" value="rhombo_GlpG"/>
    <property type="match status" value="1"/>
</dbReference>
<dbReference type="PANTHER" id="PTHR43066:SF26">
    <property type="entry name" value="RHOMBOID PROTEASE GLPG"/>
    <property type="match status" value="1"/>
</dbReference>
<dbReference type="PANTHER" id="PTHR43066">
    <property type="entry name" value="RHOMBOID-RELATED PROTEIN"/>
    <property type="match status" value="1"/>
</dbReference>
<dbReference type="Pfam" id="PF01694">
    <property type="entry name" value="Rhomboid"/>
    <property type="match status" value="1"/>
</dbReference>
<dbReference type="Pfam" id="PF12122">
    <property type="entry name" value="Rhomboid_N"/>
    <property type="match status" value="1"/>
</dbReference>
<dbReference type="SUPFAM" id="SSF144091">
    <property type="entry name" value="Rhomboid-like"/>
    <property type="match status" value="1"/>
</dbReference>
<proteinExistence type="inferred from homology"/>
<comment type="function">
    <text evidence="1">Rhomboid-type serine protease that catalyzes intramembrane proteolysis.</text>
</comment>
<comment type="catalytic activity">
    <reaction evidence="1">
        <text>Cleaves type-1 transmembrane domains using a catalytic dyad composed of serine and histidine that are contributed by different transmembrane domains.</text>
        <dbReference type="EC" id="3.4.21.105"/>
    </reaction>
</comment>
<comment type="subcellular location">
    <subcellularLocation>
        <location evidence="1">Cell inner membrane</location>
        <topology evidence="1">Multi-pass membrane protein</topology>
    </subcellularLocation>
</comment>
<comment type="similarity">
    <text evidence="1">Belongs to the peptidase S54 family.</text>
</comment>
<sequence length="276" mass="31275">MLMITSFANPRVAQAFVDYMATQGVILTIQQHNQSDVWLADESQAERVRAELARFLENPADPRYLAASWQAGHTGSGLHYRRYPFFAALRERAGPVTWVVMIACVVVFIAMQILGDQEVMLWLAWPFDPTLKFEFWRYFTHALMHFSLMHILFNLLWWWYLGGAVEKRLGSGKLIVITLISALLSGYVQQKFSGPWFGGLSGVVYALMGYVWLRGERDPQSGIYLQRGLIIFALIWIVAGWFDLFGMSMANGAHIAGLAVGLAMAFVDSLNARKRK</sequence>
<protein>
    <recommendedName>
        <fullName evidence="1">Rhomboid protease GlpG</fullName>
        <ecNumber evidence="1">3.4.21.105</ecNumber>
    </recommendedName>
    <alternativeName>
        <fullName evidence="1">Intramembrane serine protease</fullName>
    </alternativeName>
</protein>
<gene>
    <name evidence="1" type="primary">glpG</name>
    <name type="ordered locus">ECSE_3690</name>
</gene>
<organism>
    <name type="scientific">Escherichia coli (strain SE11)</name>
    <dbReference type="NCBI Taxonomy" id="409438"/>
    <lineage>
        <taxon>Bacteria</taxon>
        <taxon>Pseudomonadati</taxon>
        <taxon>Pseudomonadota</taxon>
        <taxon>Gammaproteobacteria</taxon>
        <taxon>Enterobacterales</taxon>
        <taxon>Enterobacteriaceae</taxon>
        <taxon>Escherichia</taxon>
    </lineage>
</organism>
<keyword id="KW-0997">Cell inner membrane</keyword>
<keyword id="KW-1003">Cell membrane</keyword>
<keyword id="KW-0378">Hydrolase</keyword>
<keyword id="KW-0472">Membrane</keyword>
<keyword id="KW-0645">Protease</keyword>
<keyword id="KW-0720">Serine protease</keyword>
<keyword id="KW-0812">Transmembrane</keyword>
<keyword id="KW-1133">Transmembrane helix</keyword>
<reference key="1">
    <citation type="journal article" date="2008" name="DNA Res.">
        <title>Complete genome sequence and comparative analysis of the wild-type commensal Escherichia coli strain SE11 isolated from a healthy adult.</title>
        <authorList>
            <person name="Oshima K."/>
            <person name="Toh H."/>
            <person name="Ogura Y."/>
            <person name="Sasamoto H."/>
            <person name="Morita H."/>
            <person name="Park S.-H."/>
            <person name="Ooka T."/>
            <person name="Iyoda S."/>
            <person name="Taylor T.D."/>
            <person name="Hayashi T."/>
            <person name="Itoh K."/>
            <person name="Hattori M."/>
        </authorList>
    </citation>
    <scope>NUCLEOTIDE SEQUENCE [LARGE SCALE GENOMIC DNA]</scope>
    <source>
        <strain>SE11</strain>
    </source>
</reference>